<proteinExistence type="inferred from homology"/>
<dbReference type="EC" id="6.5.1.4" evidence="1"/>
<dbReference type="EMBL" id="AM933172">
    <property type="protein sequence ID" value="CAR34919.1"/>
    <property type="molecule type" value="Genomic_DNA"/>
</dbReference>
<dbReference type="RefSeq" id="WP_000101024.1">
    <property type="nucleotide sequence ID" value="NC_011294.1"/>
</dbReference>
<dbReference type="SMR" id="B5R378"/>
<dbReference type="KEGG" id="set:SEN3344"/>
<dbReference type="HOGENOM" id="CLU_027882_0_0_6"/>
<dbReference type="Proteomes" id="UP000000613">
    <property type="component" value="Chromosome"/>
</dbReference>
<dbReference type="GO" id="GO:0005737">
    <property type="term" value="C:cytoplasm"/>
    <property type="evidence" value="ECO:0007669"/>
    <property type="project" value="UniProtKB-SubCell"/>
</dbReference>
<dbReference type="GO" id="GO:0005524">
    <property type="term" value="F:ATP binding"/>
    <property type="evidence" value="ECO:0007669"/>
    <property type="project" value="UniProtKB-KW"/>
</dbReference>
<dbReference type="GO" id="GO:0003963">
    <property type="term" value="F:RNA-3'-phosphate cyclase activity"/>
    <property type="evidence" value="ECO:0007669"/>
    <property type="project" value="UniProtKB-UniRule"/>
</dbReference>
<dbReference type="GO" id="GO:0006396">
    <property type="term" value="P:RNA processing"/>
    <property type="evidence" value="ECO:0007669"/>
    <property type="project" value="InterPro"/>
</dbReference>
<dbReference type="CDD" id="cd00874">
    <property type="entry name" value="RNA_Cyclase_Class_II"/>
    <property type="match status" value="1"/>
</dbReference>
<dbReference type="FunFam" id="3.65.10.20:FF:000002">
    <property type="entry name" value="GM19193"/>
    <property type="match status" value="1"/>
</dbReference>
<dbReference type="FunFam" id="3.30.360.20:FF:000003">
    <property type="entry name" value="RNA 3'-terminal phosphate cyclase"/>
    <property type="match status" value="1"/>
</dbReference>
<dbReference type="Gene3D" id="3.65.10.20">
    <property type="entry name" value="RNA 3'-terminal phosphate cyclase domain"/>
    <property type="match status" value="1"/>
</dbReference>
<dbReference type="Gene3D" id="3.30.360.20">
    <property type="entry name" value="RNA 3'-terminal phosphate cyclase, insert domain"/>
    <property type="match status" value="1"/>
</dbReference>
<dbReference type="HAMAP" id="MF_00200">
    <property type="entry name" value="RTC"/>
    <property type="match status" value="1"/>
</dbReference>
<dbReference type="InterPro" id="IPR013791">
    <property type="entry name" value="RNA3'-term_phos_cycl_insert"/>
</dbReference>
<dbReference type="InterPro" id="IPR023797">
    <property type="entry name" value="RNA3'_phos_cyclase_dom"/>
</dbReference>
<dbReference type="InterPro" id="IPR037136">
    <property type="entry name" value="RNA3'_phos_cyclase_dom_sf"/>
</dbReference>
<dbReference type="InterPro" id="IPR000228">
    <property type="entry name" value="RNA3'_term_phos_cyc"/>
</dbReference>
<dbReference type="InterPro" id="IPR017770">
    <property type="entry name" value="RNA3'_term_phos_cyc_type_1"/>
</dbReference>
<dbReference type="InterPro" id="IPR013792">
    <property type="entry name" value="RNA3'P_cycl/enolpyr_Trfase_a/b"/>
</dbReference>
<dbReference type="InterPro" id="IPR036553">
    <property type="entry name" value="RPTC_insert"/>
</dbReference>
<dbReference type="NCBIfam" id="NF003246">
    <property type="entry name" value="PRK04204.1-2"/>
    <property type="match status" value="1"/>
</dbReference>
<dbReference type="NCBIfam" id="NF003247">
    <property type="entry name" value="PRK04204.1-3"/>
    <property type="match status" value="1"/>
</dbReference>
<dbReference type="NCBIfam" id="TIGR03399">
    <property type="entry name" value="RNA_3prim_cycl"/>
    <property type="match status" value="1"/>
</dbReference>
<dbReference type="PANTHER" id="PTHR11096">
    <property type="entry name" value="RNA 3' TERMINAL PHOSPHATE CYCLASE"/>
    <property type="match status" value="1"/>
</dbReference>
<dbReference type="PANTHER" id="PTHR11096:SF0">
    <property type="entry name" value="RNA 3'-TERMINAL PHOSPHATE CYCLASE"/>
    <property type="match status" value="1"/>
</dbReference>
<dbReference type="Pfam" id="PF01137">
    <property type="entry name" value="RTC"/>
    <property type="match status" value="1"/>
</dbReference>
<dbReference type="Pfam" id="PF05189">
    <property type="entry name" value="RTC_insert"/>
    <property type="match status" value="1"/>
</dbReference>
<dbReference type="PIRSF" id="PIRSF005378">
    <property type="entry name" value="RNA3'_term_phos_cycl_euk"/>
    <property type="match status" value="1"/>
</dbReference>
<dbReference type="SUPFAM" id="SSF55205">
    <property type="entry name" value="EPT/RTPC-like"/>
    <property type="match status" value="2"/>
</dbReference>
<dbReference type="SUPFAM" id="SSF52913">
    <property type="entry name" value="RNA 3'-terminal phosphate cyclase, RPTC, insert domain"/>
    <property type="match status" value="1"/>
</dbReference>
<protein>
    <recommendedName>
        <fullName evidence="1">RNA 3'-terminal phosphate cyclase</fullName>
        <shortName evidence="1">RNA cyclase</shortName>
        <shortName evidence="1">RNA-3'-phosphate cyclase</shortName>
        <ecNumber evidence="1">6.5.1.4</ecNumber>
    </recommendedName>
</protein>
<sequence>MARIIALDGAQGEGGGQILRSALSLSMITGQPFEMSDIRAGRAKPGLLRQHLTAVRAATEICGAQVNGDELGSQQLRFTPGPIRGGEYRFAIGSAGSCMLVLQTVLPALWFADGSSRVEVHGGTHNQAAPSADFICRVWEPLLARMGISQRTTLIKHGFYPAGGGAAATVVEPATSLRGLTLISRGETLRTTAEALLAAVPYHVGEREVATLEAHFPLAEKNVVALEGGCGPGNALLLMIQSEQLTELFAAFGVKGTSAEAVANQVAHEARRYLASPAAVGEHLADQLILPLALAGEGAFTVARASAHLLTNIAVVERFLPVRFSCEATESGYLVRVSD</sequence>
<name>RTCA_SALEP</name>
<keyword id="KW-0067">ATP-binding</keyword>
<keyword id="KW-0963">Cytoplasm</keyword>
<keyword id="KW-0436">Ligase</keyword>
<keyword id="KW-0547">Nucleotide-binding</keyword>
<feature type="chain" id="PRO_1000099352" description="RNA 3'-terminal phosphate cyclase">
    <location>
        <begin position="1"/>
        <end position="339"/>
    </location>
</feature>
<feature type="active site" description="Tele-AMP-histidine intermediate" evidence="1">
    <location>
        <position position="308"/>
    </location>
</feature>
<feature type="binding site" evidence="1">
    <location>
        <position position="103"/>
    </location>
    <ligand>
        <name>ATP</name>
        <dbReference type="ChEBI" id="CHEBI:30616"/>
    </ligand>
</feature>
<feature type="binding site" evidence="1">
    <location>
        <begin position="283"/>
        <end position="287"/>
    </location>
    <ligand>
        <name>ATP</name>
        <dbReference type="ChEBI" id="CHEBI:30616"/>
    </ligand>
</feature>
<gene>
    <name evidence="1" type="primary">rtcA</name>
    <name type="ordered locus">SEN3344</name>
</gene>
<accession>B5R378</accession>
<organism>
    <name type="scientific">Salmonella enteritidis PT4 (strain P125109)</name>
    <dbReference type="NCBI Taxonomy" id="550537"/>
    <lineage>
        <taxon>Bacteria</taxon>
        <taxon>Pseudomonadati</taxon>
        <taxon>Pseudomonadota</taxon>
        <taxon>Gammaproteobacteria</taxon>
        <taxon>Enterobacterales</taxon>
        <taxon>Enterobacteriaceae</taxon>
        <taxon>Salmonella</taxon>
    </lineage>
</organism>
<evidence type="ECO:0000255" key="1">
    <source>
        <dbReference type="HAMAP-Rule" id="MF_00200"/>
    </source>
</evidence>
<reference key="1">
    <citation type="journal article" date="2008" name="Genome Res.">
        <title>Comparative genome analysis of Salmonella enteritidis PT4 and Salmonella gallinarum 287/91 provides insights into evolutionary and host adaptation pathways.</title>
        <authorList>
            <person name="Thomson N.R."/>
            <person name="Clayton D.J."/>
            <person name="Windhorst D."/>
            <person name="Vernikos G."/>
            <person name="Davidson S."/>
            <person name="Churcher C."/>
            <person name="Quail M.A."/>
            <person name="Stevens M."/>
            <person name="Jones M.A."/>
            <person name="Watson M."/>
            <person name="Barron A."/>
            <person name="Layton A."/>
            <person name="Pickard D."/>
            <person name="Kingsley R.A."/>
            <person name="Bignell A."/>
            <person name="Clark L."/>
            <person name="Harris B."/>
            <person name="Ormond D."/>
            <person name="Abdellah Z."/>
            <person name="Brooks K."/>
            <person name="Cherevach I."/>
            <person name="Chillingworth T."/>
            <person name="Woodward J."/>
            <person name="Norberczak H."/>
            <person name="Lord A."/>
            <person name="Arrowsmith C."/>
            <person name="Jagels K."/>
            <person name="Moule S."/>
            <person name="Mungall K."/>
            <person name="Saunders M."/>
            <person name="Whitehead S."/>
            <person name="Chabalgoity J.A."/>
            <person name="Maskell D."/>
            <person name="Humphreys T."/>
            <person name="Roberts M."/>
            <person name="Barrow P.A."/>
            <person name="Dougan G."/>
            <person name="Parkhill J."/>
        </authorList>
    </citation>
    <scope>NUCLEOTIDE SEQUENCE [LARGE SCALE GENOMIC DNA]</scope>
    <source>
        <strain>P125109</strain>
    </source>
</reference>
<comment type="function">
    <text evidence="1">Catalyzes the conversion of 3'-phosphate to a 2',3'-cyclic phosphodiester at the end of RNA. The mechanism of action of the enzyme occurs in 3 steps: (A) adenylation of the enzyme by ATP; (B) transfer of adenylate to an RNA-N3'P to produce RNA-N3'PP5'A; (C) and attack of the adjacent 2'-hydroxyl on the 3'-phosphorus in the diester linkage to produce the cyclic end product. The biological role of this enzyme is unknown but it is likely to function in some aspects of cellular RNA processing.</text>
</comment>
<comment type="catalytic activity">
    <reaction evidence="1">
        <text>a 3'-end 3'-phospho-ribonucleotide-RNA + ATP = a 3'-end 2',3'-cyclophospho-ribonucleotide-RNA + AMP + diphosphate</text>
        <dbReference type="Rhea" id="RHEA:23976"/>
        <dbReference type="Rhea" id="RHEA-COMP:10463"/>
        <dbReference type="Rhea" id="RHEA-COMP:10464"/>
        <dbReference type="ChEBI" id="CHEBI:30616"/>
        <dbReference type="ChEBI" id="CHEBI:33019"/>
        <dbReference type="ChEBI" id="CHEBI:83062"/>
        <dbReference type="ChEBI" id="CHEBI:83064"/>
        <dbReference type="ChEBI" id="CHEBI:456215"/>
        <dbReference type="EC" id="6.5.1.4"/>
    </reaction>
</comment>
<comment type="subcellular location">
    <subcellularLocation>
        <location evidence="1">Cytoplasm</location>
    </subcellularLocation>
</comment>
<comment type="similarity">
    <text evidence="1">Belongs to the RNA 3'-terminal cyclase family. Type 1 subfamily.</text>
</comment>